<keyword id="KW-1185">Reference proteome</keyword>
<keyword id="KW-0687">Ribonucleoprotein</keyword>
<keyword id="KW-0689">Ribosomal protein</keyword>
<keyword id="KW-0694">RNA-binding</keyword>
<keyword id="KW-0699">rRNA-binding</keyword>
<organism>
    <name type="scientific">Magnetococcus marinus (strain ATCC BAA-1437 / JCM 17883 / MC-1)</name>
    <dbReference type="NCBI Taxonomy" id="156889"/>
    <lineage>
        <taxon>Bacteria</taxon>
        <taxon>Pseudomonadati</taxon>
        <taxon>Pseudomonadota</taxon>
        <taxon>Alphaproteobacteria</taxon>
        <taxon>Magnetococcales</taxon>
        <taxon>Magnetococcaceae</taxon>
        <taxon>Magnetococcus</taxon>
    </lineage>
</organism>
<reference key="1">
    <citation type="journal article" date="2009" name="Appl. Environ. Microbiol.">
        <title>Complete genome sequence of the chemolithoautotrophic marine magnetotactic coccus strain MC-1.</title>
        <authorList>
            <person name="Schubbe S."/>
            <person name="Williams T.J."/>
            <person name="Xie G."/>
            <person name="Kiss H.E."/>
            <person name="Brettin T.S."/>
            <person name="Martinez D."/>
            <person name="Ross C.A."/>
            <person name="Schuler D."/>
            <person name="Cox B.L."/>
            <person name="Nealson K.H."/>
            <person name="Bazylinski D.A."/>
        </authorList>
    </citation>
    <scope>NUCLEOTIDE SEQUENCE [LARGE SCALE GENOMIC DNA]</scope>
    <source>
        <strain>ATCC BAA-1437 / JCM 17883 / MC-1</strain>
    </source>
</reference>
<gene>
    <name evidence="1" type="primary">rplO</name>
    <name type="ordered locus">Mmc1_0866</name>
</gene>
<name>RL15_MAGMM</name>
<accession>A0L5Z2</accession>
<proteinExistence type="inferred from homology"/>
<protein>
    <recommendedName>
        <fullName evidence="1">Large ribosomal subunit protein uL15</fullName>
    </recommendedName>
    <alternativeName>
        <fullName evidence="3">50S ribosomal protein L15</fullName>
    </alternativeName>
</protein>
<evidence type="ECO:0000255" key="1">
    <source>
        <dbReference type="HAMAP-Rule" id="MF_01341"/>
    </source>
</evidence>
<evidence type="ECO:0000256" key="2">
    <source>
        <dbReference type="SAM" id="MobiDB-lite"/>
    </source>
</evidence>
<evidence type="ECO:0000305" key="3"/>
<dbReference type="EMBL" id="CP000471">
    <property type="protein sequence ID" value="ABK43385.1"/>
    <property type="molecule type" value="Genomic_DNA"/>
</dbReference>
<dbReference type="RefSeq" id="WP_011712544.1">
    <property type="nucleotide sequence ID" value="NC_008576.1"/>
</dbReference>
<dbReference type="SMR" id="A0L5Z2"/>
<dbReference type="STRING" id="156889.Mmc1_0866"/>
<dbReference type="KEGG" id="mgm:Mmc1_0866"/>
<dbReference type="eggNOG" id="COG0200">
    <property type="taxonomic scope" value="Bacteria"/>
</dbReference>
<dbReference type="HOGENOM" id="CLU_055188_4_2_5"/>
<dbReference type="OrthoDB" id="9810293at2"/>
<dbReference type="Proteomes" id="UP000002586">
    <property type="component" value="Chromosome"/>
</dbReference>
<dbReference type="GO" id="GO:0022625">
    <property type="term" value="C:cytosolic large ribosomal subunit"/>
    <property type="evidence" value="ECO:0007669"/>
    <property type="project" value="TreeGrafter"/>
</dbReference>
<dbReference type="GO" id="GO:0019843">
    <property type="term" value="F:rRNA binding"/>
    <property type="evidence" value="ECO:0007669"/>
    <property type="project" value="UniProtKB-UniRule"/>
</dbReference>
<dbReference type="GO" id="GO:0003735">
    <property type="term" value="F:structural constituent of ribosome"/>
    <property type="evidence" value="ECO:0007669"/>
    <property type="project" value="InterPro"/>
</dbReference>
<dbReference type="GO" id="GO:0006412">
    <property type="term" value="P:translation"/>
    <property type="evidence" value="ECO:0007669"/>
    <property type="project" value="UniProtKB-UniRule"/>
</dbReference>
<dbReference type="Gene3D" id="3.100.10.10">
    <property type="match status" value="1"/>
</dbReference>
<dbReference type="HAMAP" id="MF_01341">
    <property type="entry name" value="Ribosomal_uL15"/>
    <property type="match status" value="1"/>
</dbReference>
<dbReference type="InterPro" id="IPR030878">
    <property type="entry name" value="Ribosomal_uL15"/>
</dbReference>
<dbReference type="InterPro" id="IPR021131">
    <property type="entry name" value="Ribosomal_uL15/eL18"/>
</dbReference>
<dbReference type="InterPro" id="IPR036227">
    <property type="entry name" value="Ribosomal_uL15/eL18_sf"/>
</dbReference>
<dbReference type="InterPro" id="IPR005749">
    <property type="entry name" value="Ribosomal_uL15_bac-type"/>
</dbReference>
<dbReference type="InterPro" id="IPR001196">
    <property type="entry name" value="Ribosomal_uL15_CS"/>
</dbReference>
<dbReference type="NCBIfam" id="TIGR01071">
    <property type="entry name" value="rplO_bact"/>
    <property type="match status" value="1"/>
</dbReference>
<dbReference type="PANTHER" id="PTHR12934">
    <property type="entry name" value="50S RIBOSOMAL PROTEIN L15"/>
    <property type="match status" value="1"/>
</dbReference>
<dbReference type="PANTHER" id="PTHR12934:SF11">
    <property type="entry name" value="LARGE RIBOSOMAL SUBUNIT PROTEIN UL15M"/>
    <property type="match status" value="1"/>
</dbReference>
<dbReference type="Pfam" id="PF00828">
    <property type="entry name" value="Ribosomal_L27A"/>
    <property type="match status" value="1"/>
</dbReference>
<dbReference type="SUPFAM" id="SSF52080">
    <property type="entry name" value="Ribosomal proteins L15p and L18e"/>
    <property type="match status" value="1"/>
</dbReference>
<dbReference type="PROSITE" id="PS00475">
    <property type="entry name" value="RIBOSOMAL_L15"/>
    <property type="match status" value="1"/>
</dbReference>
<comment type="function">
    <text evidence="1">Binds to the 23S rRNA.</text>
</comment>
<comment type="subunit">
    <text evidence="1">Part of the 50S ribosomal subunit.</text>
</comment>
<comment type="similarity">
    <text evidence="1">Belongs to the universal ribosomal protein uL15 family.</text>
</comment>
<feature type="chain" id="PRO_1000054487" description="Large ribosomal subunit protein uL15">
    <location>
        <begin position="1"/>
        <end position="157"/>
    </location>
</feature>
<feature type="region of interest" description="Disordered" evidence="2">
    <location>
        <begin position="1"/>
        <end position="64"/>
    </location>
</feature>
<feature type="compositionally biased region" description="Gly residues" evidence="2">
    <location>
        <begin position="21"/>
        <end position="31"/>
    </location>
</feature>
<sequence>MKLNEIPAVPGNQQSRNRVGRGPGSGNGKTAGRGHKGQKARSGGFHKSGFEGGQMPLQRRLPKRGFKNFTRKEYTIVQVEDLEKFFDAGSEVNAEALNDLGLLGKKQKSGIKLLANGDITKAITVYVDKASAAAVAKMEAAGGKVVLAVVADPEGDA</sequence>